<feature type="chain" id="PRO_0000114575" description="Alanine racemase">
    <location>
        <begin position="1"/>
        <end position="382"/>
    </location>
</feature>
<feature type="active site" description="Proton acceptor; specific for D-alanine" evidence="1">
    <location>
        <position position="39"/>
    </location>
</feature>
<feature type="active site" description="Proton acceptor; specific for L-alanine" evidence="1">
    <location>
        <position position="265"/>
    </location>
</feature>
<feature type="binding site" evidence="1">
    <location>
        <position position="138"/>
    </location>
    <ligand>
        <name>substrate</name>
    </ligand>
</feature>
<feature type="binding site" evidence="1">
    <location>
        <position position="312"/>
    </location>
    <ligand>
        <name>substrate</name>
    </ligand>
</feature>
<feature type="modified residue" description="N6-(pyridoxal phosphate)lysine" evidence="1">
    <location>
        <position position="39"/>
    </location>
</feature>
<name>ALR_STAEQ</name>
<reference key="1">
    <citation type="journal article" date="2005" name="J. Bacteriol.">
        <title>Insights on evolution of virulence and resistance from the complete genome analysis of an early methicillin-resistant Staphylococcus aureus strain and a biofilm-producing methicillin-resistant Staphylococcus epidermidis strain.</title>
        <authorList>
            <person name="Gill S.R."/>
            <person name="Fouts D.E."/>
            <person name="Archer G.L."/>
            <person name="Mongodin E.F."/>
            <person name="DeBoy R.T."/>
            <person name="Ravel J."/>
            <person name="Paulsen I.T."/>
            <person name="Kolonay J.F."/>
            <person name="Brinkac L.M."/>
            <person name="Beanan M.J."/>
            <person name="Dodson R.J."/>
            <person name="Daugherty S.C."/>
            <person name="Madupu R."/>
            <person name="Angiuoli S.V."/>
            <person name="Durkin A.S."/>
            <person name="Haft D.H."/>
            <person name="Vamathevan J.J."/>
            <person name="Khouri H."/>
            <person name="Utterback T.R."/>
            <person name="Lee C."/>
            <person name="Dimitrov G."/>
            <person name="Jiang L."/>
            <person name="Qin H."/>
            <person name="Weidman J."/>
            <person name="Tran K."/>
            <person name="Kang K.H."/>
            <person name="Hance I.R."/>
            <person name="Nelson K.E."/>
            <person name="Fraser C.M."/>
        </authorList>
    </citation>
    <scope>NUCLEOTIDE SEQUENCE [LARGE SCALE GENOMIC DNA]</scope>
    <source>
        <strain>ATCC 35984 / DSM 28319 / BCRC 17069 / CCUG 31568 / BM 3577 / RP62A</strain>
    </source>
</reference>
<proteinExistence type="inferred from homology"/>
<accession>Q5HME5</accession>
<protein>
    <recommendedName>
        <fullName evidence="1">Alanine racemase</fullName>
        <ecNumber evidence="1">5.1.1.1</ecNumber>
    </recommendedName>
</protein>
<gene>
    <name type="primary">alr</name>
    <name type="ordered locus">SERP1683</name>
</gene>
<sequence length="382" mass="42955">MSEKFYRATYLNVNLDAILANYQNFNQLHANKTVISVIKANGYGLGSVKIAQHLMRHGATFFAVATLDEAIELRMHGVDAKLLVLGVVPTEDIEKAIQHRVALTVPSKAWLKETIKQIPDDNQKNLWLHVKLDTGMGRIGMKDIDEYKEVVDLINKRDHLVFEGVFTHFASADEPGSSMNEQYTLFKEMVNQVEKPIYIHCQNSAGSLLMDGQFCNAIRLGISLYGYYPSEYVKDNVKVHLRPSAQLVSETVQVKTLKVGETVSYGRTFIADEEMTIAILPIGYADGYLRSMQGAFVNVNGSQCEVIGRICMDQMIVKVPSHVKTGEKVILMDNHVDSPQSAEAVANKQGTINYEVLCNLSRRLPRIYYYDNNEEVTNELLK</sequence>
<keyword id="KW-0413">Isomerase</keyword>
<keyword id="KW-0663">Pyridoxal phosphate</keyword>
<keyword id="KW-1185">Reference proteome</keyword>
<dbReference type="EC" id="5.1.1.1" evidence="1"/>
<dbReference type="EMBL" id="CP000029">
    <property type="protein sequence ID" value="AAW55046.1"/>
    <property type="molecule type" value="Genomic_DNA"/>
</dbReference>
<dbReference type="RefSeq" id="WP_002457107.1">
    <property type="nucleotide sequence ID" value="NC_002976.3"/>
</dbReference>
<dbReference type="SMR" id="Q5HME5"/>
<dbReference type="STRING" id="176279.SERP1683"/>
<dbReference type="GeneID" id="50018225"/>
<dbReference type="KEGG" id="ser:SERP1683"/>
<dbReference type="eggNOG" id="COG0787">
    <property type="taxonomic scope" value="Bacteria"/>
</dbReference>
<dbReference type="HOGENOM" id="CLU_028393_2_1_9"/>
<dbReference type="UniPathway" id="UPA00042">
    <property type="reaction ID" value="UER00497"/>
</dbReference>
<dbReference type="Proteomes" id="UP000000531">
    <property type="component" value="Chromosome"/>
</dbReference>
<dbReference type="GO" id="GO:0005829">
    <property type="term" value="C:cytosol"/>
    <property type="evidence" value="ECO:0007669"/>
    <property type="project" value="TreeGrafter"/>
</dbReference>
<dbReference type="GO" id="GO:0008784">
    <property type="term" value="F:alanine racemase activity"/>
    <property type="evidence" value="ECO:0007669"/>
    <property type="project" value="UniProtKB-UniRule"/>
</dbReference>
<dbReference type="GO" id="GO:0030170">
    <property type="term" value="F:pyridoxal phosphate binding"/>
    <property type="evidence" value="ECO:0007669"/>
    <property type="project" value="UniProtKB-UniRule"/>
</dbReference>
<dbReference type="GO" id="GO:0030632">
    <property type="term" value="P:D-alanine biosynthetic process"/>
    <property type="evidence" value="ECO:0007669"/>
    <property type="project" value="UniProtKB-UniRule"/>
</dbReference>
<dbReference type="GO" id="GO:0009252">
    <property type="term" value="P:peptidoglycan biosynthetic process"/>
    <property type="evidence" value="ECO:0007669"/>
    <property type="project" value="TreeGrafter"/>
</dbReference>
<dbReference type="CDD" id="cd00430">
    <property type="entry name" value="PLPDE_III_AR"/>
    <property type="match status" value="1"/>
</dbReference>
<dbReference type="FunFam" id="2.40.37.10:FF:000006">
    <property type="entry name" value="Alanine racemase"/>
    <property type="match status" value="1"/>
</dbReference>
<dbReference type="FunFam" id="3.20.20.10:FF:000002">
    <property type="entry name" value="Alanine racemase"/>
    <property type="match status" value="1"/>
</dbReference>
<dbReference type="Gene3D" id="3.20.20.10">
    <property type="entry name" value="Alanine racemase"/>
    <property type="match status" value="1"/>
</dbReference>
<dbReference type="Gene3D" id="2.40.37.10">
    <property type="entry name" value="Lyase, Ornithine Decarboxylase, Chain A, domain 1"/>
    <property type="match status" value="1"/>
</dbReference>
<dbReference type="HAMAP" id="MF_01201">
    <property type="entry name" value="Ala_racemase"/>
    <property type="match status" value="1"/>
</dbReference>
<dbReference type="InterPro" id="IPR000821">
    <property type="entry name" value="Ala_racemase"/>
</dbReference>
<dbReference type="InterPro" id="IPR009006">
    <property type="entry name" value="Ala_racemase/Decarboxylase_C"/>
</dbReference>
<dbReference type="InterPro" id="IPR011079">
    <property type="entry name" value="Ala_racemase_C"/>
</dbReference>
<dbReference type="InterPro" id="IPR001608">
    <property type="entry name" value="Ala_racemase_N"/>
</dbReference>
<dbReference type="InterPro" id="IPR020622">
    <property type="entry name" value="Ala_racemase_pyridoxalP-BS"/>
</dbReference>
<dbReference type="InterPro" id="IPR029066">
    <property type="entry name" value="PLP-binding_barrel"/>
</dbReference>
<dbReference type="NCBIfam" id="TIGR00492">
    <property type="entry name" value="alr"/>
    <property type="match status" value="1"/>
</dbReference>
<dbReference type="PANTHER" id="PTHR30511">
    <property type="entry name" value="ALANINE RACEMASE"/>
    <property type="match status" value="1"/>
</dbReference>
<dbReference type="PANTHER" id="PTHR30511:SF0">
    <property type="entry name" value="ALANINE RACEMASE, CATABOLIC-RELATED"/>
    <property type="match status" value="1"/>
</dbReference>
<dbReference type="Pfam" id="PF00842">
    <property type="entry name" value="Ala_racemase_C"/>
    <property type="match status" value="1"/>
</dbReference>
<dbReference type="Pfam" id="PF01168">
    <property type="entry name" value="Ala_racemase_N"/>
    <property type="match status" value="1"/>
</dbReference>
<dbReference type="PRINTS" id="PR00992">
    <property type="entry name" value="ALARACEMASE"/>
</dbReference>
<dbReference type="SMART" id="SM01005">
    <property type="entry name" value="Ala_racemase_C"/>
    <property type="match status" value="1"/>
</dbReference>
<dbReference type="SUPFAM" id="SSF50621">
    <property type="entry name" value="Alanine racemase C-terminal domain-like"/>
    <property type="match status" value="1"/>
</dbReference>
<dbReference type="SUPFAM" id="SSF51419">
    <property type="entry name" value="PLP-binding barrel"/>
    <property type="match status" value="1"/>
</dbReference>
<dbReference type="PROSITE" id="PS00395">
    <property type="entry name" value="ALANINE_RACEMASE"/>
    <property type="match status" value="1"/>
</dbReference>
<comment type="function">
    <text evidence="1">Catalyzes the interconversion of L-alanine and D-alanine. May also act on other amino acids.</text>
</comment>
<comment type="catalytic activity">
    <reaction evidence="1">
        <text>L-alanine = D-alanine</text>
        <dbReference type="Rhea" id="RHEA:20249"/>
        <dbReference type="ChEBI" id="CHEBI:57416"/>
        <dbReference type="ChEBI" id="CHEBI:57972"/>
        <dbReference type="EC" id="5.1.1.1"/>
    </reaction>
</comment>
<comment type="cofactor">
    <cofactor evidence="1">
        <name>pyridoxal 5'-phosphate</name>
        <dbReference type="ChEBI" id="CHEBI:597326"/>
    </cofactor>
</comment>
<comment type="pathway">
    <text evidence="1">Amino-acid biosynthesis; D-alanine biosynthesis; D-alanine from L-alanine: step 1/1.</text>
</comment>
<comment type="similarity">
    <text evidence="1">Belongs to the alanine racemase family.</text>
</comment>
<organism>
    <name type="scientific">Staphylococcus epidermidis (strain ATCC 35984 / DSM 28319 / BCRC 17069 / CCUG 31568 / BM 3577 / RP62A)</name>
    <dbReference type="NCBI Taxonomy" id="176279"/>
    <lineage>
        <taxon>Bacteria</taxon>
        <taxon>Bacillati</taxon>
        <taxon>Bacillota</taxon>
        <taxon>Bacilli</taxon>
        <taxon>Bacillales</taxon>
        <taxon>Staphylococcaceae</taxon>
        <taxon>Staphylococcus</taxon>
    </lineage>
</organism>
<evidence type="ECO:0000255" key="1">
    <source>
        <dbReference type="HAMAP-Rule" id="MF_01201"/>
    </source>
</evidence>